<proteinExistence type="inferred from homology"/>
<accession>B4SBR1</accession>
<keyword id="KW-0067">ATP-binding</keyword>
<keyword id="KW-0436">Ligase</keyword>
<keyword id="KW-0547">Nucleotide-binding</keyword>
<keyword id="KW-0648">Protein biosynthesis</keyword>
<keyword id="KW-1185">Reference proteome</keyword>
<name>GATB_PELPB</name>
<sequence>MKYELVVGLEVHCQLNTTSKAFCGCSAKFGKSANTNVCPVCLALPGALPVLNRRVVEDAVKLGLATGCSIAPHSVLARKNYFYPDLPKGYQISQFEEPICSEGMVHIDAGEGNREIRLIRIHIEEDAGKSIHDIGEETYIDLNRSGVPLLEIVSYPDLRTSKEASAYLQKVRQIVKYLGISDGNMEEGSLRCDANVSLRPVGETEYGTRTEIKNMNSFKNVEKAIDYEVERHREILEAGGVILQETRLWDADKGETRSMRGKEFAHDYRYFPDPDLVPVLVDQEMIDRIMSELPEFPEERAVRFVDEYAIPAYDAAVLTVEREVADYFEESVRVSGDAKASSNWVMGEVMRVLKESYLDIAEFSILPERLGGLIALIGKGVISTTIAKQVFELMLKSGDAPAEIVEREGLAQVSDSGAIETVVQAILDANPGQLAAYRGGKTKLLGFFVGQCMSQMKGKANPQMVNEVLLRKLEG</sequence>
<comment type="function">
    <text evidence="1">Allows the formation of correctly charged Asn-tRNA(Asn) or Gln-tRNA(Gln) through the transamidation of misacylated Asp-tRNA(Asn) or Glu-tRNA(Gln) in organisms which lack either or both of asparaginyl-tRNA or glutaminyl-tRNA synthetases. The reaction takes place in the presence of glutamine and ATP through an activated phospho-Asp-tRNA(Asn) or phospho-Glu-tRNA(Gln).</text>
</comment>
<comment type="catalytic activity">
    <reaction evidence="1">
        <text>L-glutamyl-tRNA(Gln) + L-glutamine + ATP + H2O = L-glutaminyl-tRNA(Gln) + L-glutamate + ADP + phosphate + H(+)</text>
        <dbReference type="Rhea" id="RHEA:17521"/>
        <dbReference type="Rhea" id="RHEA-COMP:9681"/>
        <dbReference type="Rhea" id="RHEA-COMP:9684"/>
        <dbReference type="ChEBI" id="CHEBI:15377"/>
        <dbReference type="ChEBI" id="CHEBI:15378"/>
        <dbReference type="ChEBI" id="CHEBI:29985"/>
        <dbReference type="ChEBI" id="CHEBI:30616"/>
        <dbReference type="ChEBI" id="CHEBI:43474"/>
        <dbReference type="ChEBI" id="CHEBI:58359"/>
        <dbReference type="ChEBI" id="CHEBI:78520"/>
        <dbReference type="ChEBI" id="CHEBI:78521"/>
        <dbReference type="ChEBI" id="CHEBI:456216"/>
    </reaction>
</comment>
<comment type="catalytic activity">
    <reaction evidence="1">
        <text>L-aspartyl-tRNA(Asn) + L-glutamine + ATP + H2O = L-asparaginyl-tRNA(Asn) + L-glutamate + ADP + phosphate + 2 H(+)</text>
        <dbReference type="Rhea" id="RHEA:14513"/>
        <dbReference type="Rhea" id="RHEA-COMP:9674"/>
        <dbReference type="Rhea" id="RHEA-COMP:9677"/>
        <dbReference type="ChEBI" id="CHEBI:15377"/>
        <dbReference type="ChEBI" id="CHEBI:15378"/>
        <dbReference type="ChEBI" id="CHEBI:29985"/>
        <dbReference type="ChEBI" id="CHEBI:30616"/>
        <dbReference type="ChEBI" id="CHEBI:43474"/>
        <dbReference type="ChEBI" id="CHEBI:58359"/>
        <dbReference type="ChEBI" id="CHEBI:78515"/>
        <dbReference type="ChEBI" id="CHEBI:78516"/>
        <dbReference type="ChEBI" id="CHEBI:456216"/>
    </reaction>
</comment>
<comment type="subunit">
    <text evidence="1">Heterotrimer of A, B and C subunits.</text>
</comment>
<comment type="similarity">
    <text evidence="1">Belongs to the GatB/GatE family. GatB subfamily.</text>
</comment>
<feature type="chain" id="PRO_1000095232" description="Aspartyl/glutamyl-tRNA(Asn/Gln) amidotransferase subunit B">
    <location>
        <begin position="1"/>
        <end position="475"/>
    </location>
</feature>
<reference key="1">
    <citation type="submission" date="2008-06" db="EMBL/GenBank/DDBJ databases">
        <title>Complete sequence of Pelodictyon phaeoclathratiforme BU-1.</title>
        <authorList>
            <consortium name="US DOE Joint Genome Institute"/>
            <person name="Lucas S."/>
            <person name="Copeland A."/>
            <person name="Lapidus A."/>
            <person name="Glavina del Rio T."/>
            <person name="Dalin E."/>
            <person name="Tice H."/>
            <person name="Bruce D."/>
            <person name="Goodwin L."/>
            <person name="Pitluck S."/>
            <person name="Schmutz J."/>
            <person name="Larimer F."/>
            <person name="Land M."/>
            <person name="Hauser L."/>
            <person name="Kyrpides N."/>
            <person name="Mikhailova N."/>
            <person name="Liu Z."/>
            <person name="Li T."/>
            <person name="Zhao F."/>
            <person name="Overmann J."/>
            <person name="Bryant D.A."/>
            <person name="Richardson P."/>
        </authorList>
    </citation>
    <scope>NUCLEOTIDE SEQUENCE [LARGE SCALE GENOMIC DNA]</scope>
    <source>
        <strain>DSM 5477 / BU-1</strain>
    </source>
</reference>
<dbReference type="EC" id="6.3.5.-" evidence="1"/>
<dbReference type="EMBL" id="CP001110">
    <property type="protein sequence ID" value="ACF42586.1"/>
    <property type="molecule type" value="Genomic_DNA"/>
</dbReference>
<dbReference type="RefSeq" id="WP_012507082.1">
    <property type="nucleotide sequence ID" value="NC_011060.1"/>
</dbReference>
<dbReference type="SMR" id="B4SBR1"/>
<dbReference type="STRING" id="324925.Ppha_0250"/>
<dbReference type="KEGG" id="pph:Ppha_0250"/>
<dbReference type="eggNOG" id="COG0064">
    <property type="taxonomic scope" value="Bacteria"/>
</dbReference>
<dbReference type="HOGENOM" id="CLU_019240_0_0_10"/>
<dbReference type="OrthoDB" id="9804078at2"/>
<dbReference type="Proteomes" id="UP000002724">
    <property type="component" value="Chromosome"/>
</dbReference>
<dbReference type="GO" id="GO:0050566">
    <property type="term" value="F:asparaginyl-tRNA synthase (glutamine-hydrolyzing) activity"/>
    <property type="evidence" value="ECO:0007669"/>
    <property type="project" value="RHEA"/>
</dbReference>
<dbReference type="GO" id="GO:0005524">
    <property type="term" value="F:ATP binding"/>
    <property type="evidence" value="ECO:0007669"/>
    <property type="project" value="UniProtKB-KW"/>
</dbReference>
<dbReference type="GO" id="GO:0050567">
    <property type="term" value="F:glutaminyl-tRNA synthase (glutamine-hydrolyzing) activity"/>
    <property type="evidence" value="ECO:0007669"/>
    <property type="project" value="UniProtKB-UniRule"/>
</dbReference>
<dbReference type="GO" id="GO:0070681">
    <property type="term" value="P:glutaminyl-tRNAGln biosynthesis via transamidation"/>
    <property type="evidence" value="ECO:0007669"/>
    <property type="project" value="TreeGrafter"/>
</dbReference>
<dbReference type="GO" id="GO:0006412">
    <property type="term" value="P:translation"/>
    <property type="evidence" value="ECO:0007669"/>
    <property type="project" value="UniProtKB-UniRule"/>
</dbReference>
<dbReference type="FunFam" id="1.10.10.410:FF:000001">
    <property type="entry name" value="Aspartyl/glutamyl-tRNA(Asn/Gln) amidotransferase subunit B"/>
    <property type="match status" value="1"/>
</dbReference>
<dbReference type="FunFam" id="1.10.150.380:FF:000001">
    <property type="entry name" value="Aspartyl/glutamyl-tRNA(Asn/Gln) amidotransferase subunit B"/>
    <property type="match status" value="1"/>
</dbReference>
<dbReference type="Gene3D" id="1.10.10.410">
    <property type="match status" value="1"/>
</dbReference>
<dbReference type="Gene3D" id="1.10.150.380">
    <property type="entry name" value="GatB domain, N-terminal subdomain"/>
    <property type="match status" value="1"/>
</dbReference>
<dbReference type="HAMAP" id="MF_00121">
    <property type="entry name" value="GatB"/>
    <property type="match status" value="1"/>
</dbReference>
<dbReference type="InterPro" id="IPR017959">
    <property type="entry name" value="Asn/Gln-tRNA_amidoTrfase_suB/E"/>
</dbReference>
<dbReference type="InterPro" id="IPR006075">
    <property type="entry name" value="Asn/Gln-tRNA_Trfase_suB/E_cat"/>
</dbReference>
<dbReference type="InterPro" id="IPR018027">
    <property type="entry name" value="Asn/Gln_amidotransferase"/>
</dbReference>
<dbReference type="InterPro" id="IPR003789">
    <property type="entry name" value="Asn/Gln_tRNA_amidoTrase-B-like"/>
</dbReference>
<dbReference type="InterPro" id="IPR004413">
    <property type="entry name" value="GatB"/>
</dbReference>
<dbReference type="InterPro" id="IPR042114">
    <property type="entry name" value="GatB_C_1"/>
</dbReference>
<dbReference type="InterPro" id="IPR023168">
    <property type="entry name" value="GatB_Yqey_C_2"/>
</dbReference>
<dbReference type="InterPro" id="IPR017958">
    <property type="entry name" value="Gln-tRNA_amidoTrfase_suB_CS"/>
</dbReference>
<dbReference type="InterPro" id="IPR014746">
    <property type="entry name" value="Gln_synth/guanido_kin_cat_dom"/>
</dbReference>
<dbReference type="NCBIfam" id="TIGR00133">
    <property type="entry name" value="gatB"/>
    <property type="match status" value="1"/>
</dbReference>
<dbReference type="NCBIfam" id="NF004012">
    <property type="entry name" value="PRK05477.1-2"/>
    <property type="match status" value="1"/>
</dbReference>
<dbReference type="NCBIfam" id="NF004014">
    <property type="entry name" value="PRK05477.1-4"/>
    <property type="match status" value="1"/>
</dbReference>
<dbReference type="NCBIfam" id="NF004015">
    <property type="entry name" value="PRK05477.1-5"/>
    <property type="match status" value="1"/>
</dbReference>
<dbReference type="PANTHER" id="PTHR11659">
    <property type="entry name" value="GLUTAMYL-TRNA GLN AMIDOTRANSFERASE SUBUNIT B MITOCHONDRIAL AND PROKARYOTIC PET112-RELATED"/>
    <property type="match status" value="1"/>
</dbReference>
<dbReference type="PANTHER" id="PTHR11659:SF0">
    <property type="entry name" value="GLUTAMYL-TRNA(GLN) AMIDOTRANSFERASE SUBUNIT B, MITOCHONDRIAL"/>
    <property type="match status" value="1"/>
</dbReference>
<dbReference type="Pfam" id="PF02934">
    <property type="entry name" value="GatB_N"/>
    <property type="match status" value="1"/>
</dbReference>
<dbReference type="Pfam" id="PF02637">
    <property type="entry name" value="GatB_Yqey"/>
    <property type="match status" value="1"/>
</dbReference>
<dbReference type="SMART" id="SM00845">
    <property type="entry name" value="GatB_Yqey"/>
    <property type="match status" value="1"/>
</dbReference>
<dbReference type="SUPFAM" id="SSF89095">
    <property type="entry name" value="GatB/YqeY motif"/>
    <property type="match status" value="1"/>
</dbReference>
<dbReference type="SUPFAM" id="SSF55931">
    <property type="entry name" value="Glutamine synthetase/guanido kinase"/>
    <property type="match status" value="1"/>
</dbReference>
<dbReference type="PROSITE" id="PS01234">
    <property type="entry name" value="GATB"/>
    <property type="match status" value="1"/>
</dbReference>
<protein>
    <recommendedName>
        <fullName evidence="1">Aspartyl/glutamyl-tRNA(Asn/Gln) amidotransferase subunit B</fullName>
        <shortName evidence="1">Asp/Glu-ADT subunit B</shortName>
        <ecNumber evidence="1">6.3.5.-</ecNumber>
    </recommendedName>
</protein>
<organism>
    <name type="scientific">Pelodictyon phaeoclathratiforme (strain DSM 5477 / BU-1)</name>
    <dbReference type="NCBI Taxonomy" id="324925"/>
    <lineage>
        <taxon>Bacteria</taxon>
        <taxon>Pseudomonadati</taxon>
        <taxon>Chlorobiota</taxon>
        <taxon>Chlorobiia</taxon>
        <taxon>Chlorobiales</taxon>
        <taxon>Chlorobiaceae</taxon>
        <taxon>Chlorobium/Pelodictyon group</taxon>
        <taxon>Pelodictyon</taxon>
    </lineage>
</organism>
<gene>
    <name evidence="1" type="primary">gatB</name>
    <name type="ordered locus">Ppha_0250</name>
</gene>
<evidence type="ECO:0000255" key="1">
    <source>
        <dbReference type="HAMAP-Rule" id="MF_00121"/>
    </source>
</evidence>